<proteinExistence type="inferred from homology"/>
<organism>
    <name type="scientific">Flaveria pringlei</name>
    <dbReference type="NCBI Taxonomy" id="4226"/>
    <lineage>
        <taxon>Eukaryota</taxon>
        <taxon>Viridiplantae</taxon>
        <taxon>Streptophyta</taxon>
        <taxon>Embryophyta</taxon>
        <taxon>Tracheophyta</taxon>
        <taxon>Spermatophyta</taxon>
        <taxon>Magnoliopsida</taxon>
        <taxon>eudicotyledons</taxon>
        <taxon>Gunneridae</taxon>
        <taxon>Pentapetalae</taxon>
        <taxon>asterids</taxon>
        <taxon>campanulids</taxon>
        <taxon>Asterales</taxon>
        <taxon>Asteraceae</taxon>
        <taxon>Asteroideae</taxon>
        <taxon>Heliantheae alliance</taxon>
        <taxon>Tageteae</taxon>
        <taxon>Flaveria</taxon>
    </lineage>
</organism>
<dbReference type="EC" id="1.4.4.2"/>
<dbReference type="EMBL" id="Z54239">
    <property type="protein sequence ID" value="CAA91000.1"/>
    <property type="molecule type" value="Genomic_DNA"/>
</dbReference>
<dbReference type="PIR" id="S63536">
    <property type="entry name" value="S63536"/>
</dbReference>
<dbReference type="SMR" id="P49362"/>
<dbReference type="GO" id="GO:0048046">
    <property type="term" value="C:apoplast"/>
    <property type="evidence" value="ECO:0007669"/>
    <property type="project" value="TreeGrafter"/>
</dbReference>
<dbReference type="GO" id="GO:0009941">
    <property type="term" value="C:chloroplast envelope"/>
    <property type="evidence" value="ECO:0007669"/>
    <property type="project" value="TreeGrafter"/>
</dbReference>
<dbReference type="GO" id="GO:0005960">
    <property type="term" value="C:glycine cleavage complex"/>
    <property type="evidence" value="ECO:0007669"/>
    <property type="project" value="TreeGrafter"/>
</dbReference>
<dbReference type="GO" id="GO:0005739">
    <property type="term" value="C:mitochondrion"/>
    <property type="evidence" value="ECO:0007669"/>
    <property type="project" value="UniProtKB-SubCell"/>
</dbReference>
<dbReference type="GO" id="GO:0016594">
    <property type="term" value="F:glycine binding"/>
    <property type="evidence" value="ECO:0007669"/>
    <property type="project" value="TreeGrafter"/>
</dbReference>
<dbReference type="GO" id="GO:0004375">
    <property type="term" value="F:glycine dehydrogenase (decarboxylating) activity"/>
    <property type="evidence" value="ECO:0007669"/>
    <property type="project" value="UniProtKB-EC"/>
</dbReference>
<dbReference type="GO" id="GO:0030170">
    <property type="term" value="F:pyridoxal phosphate binding"/>
    <property type="evidence" value="ECO:0007669"/>
    <property type="project" value="TreeGrafter"/>
</dbReference>
<dbReference type="GO" id="GO:0019464">
    <property type="term" value="P:glycine decarboxylation via glycine cleavage system"/>
    <property type="evidence" value="ECO:0007669"/>
    <property type="project" value="TreeGrafter"/>
</dbReference>
<dbReference type="CDD" id="cd00613">
    <property type="entry name" value="GDC-P"/>
    <property type="match status" value="2"/>
</dbReference>
<dbReference type="FunFam" id="3.90.1150.10:FF:000025">
    <property type="entry name" value="Glycine cleavage system P protein"/>
    <property type="match status" value="1"/>
</dbReference>
<dbReference type="FunFam" id="3.40.640.10:FF:000005">
    <property type="entry name" value="Glycine dehydrogenase (decarboxylating), mitochondrial"/>
    <property type="match status" value="1"/>
</dbReference>
<dbReference type="FunFam" id="3.90.1150.10:FF:000007">
    <property type="entry name" value="Glycine dehydrogenase (decarboxylating), mitochondrial"/>
    <property type="match status" value="1"/>
</dbReference>
<dbReference type="FunFam" id="3.40.640.10:FF:000007">
    <property type="entry name" value="glycine dehydrogenase (Decarboxylating), mitochondrial"/>
    <property type="match status" value="1"/>
</dbReference>
<dbReference type="Gene3D" id="3.90.1150.10">
    <property type="entry name" value="Aspartate Aminotransferase, domain 1"/>
    <property type="match status" value="2"/>
</dbReference>
<dbReference type="Gene3D" id="3.40.640.10">
    <property type="entry name" value="Type I PLP-dependent aspartate aminotransferase-like (Major domain)"/>
    <property type="match status" value="2"/>
</dbReference>
<dbReference type="HAMAP" id="MF_00711">
    <property type="entry name" value="GcvP"/>
    <property type="match status" value="1"/>
</dbReference>
<dbReference type="InterPro" id="IPR003437">
    <property type="entry name" value="GcvP"/>
</dbReference>
<dbReference type="InterPro" id="IPR049316">
    <property type="entry name" value="GDC-P_C"/>
</dbReference>
<dbReference type="InterPro" id="IPR049315">
    <property type="entry name" value="GDC-P_N"/>
</dbReference>
<dbReference type="InterPro" id="IPR020581">
    <property type="entry name" value="GDC_P"/>
</dbReference>
<dbReference type="InterPro" id="IPR015424">
    <property type="entry name" value="PyrdxlP-dep_Trfase"/>
</dbReference>
<dbReference type="InterPro" id="IPR015421">
    <property type="entry name" value="PyrdxlP-dep_Trfase_major"/>
</dbReference>
<dbReference type="InterPro" id="IPR015422">
    <property type="entry name" value="PyrdxlP-dep_Trfase_small"/>
</dbReference>
<dbReference type="NCBIfam" id="TIGR00461">
    <property type="entry name" value="gcvP"/>
    <property type="match status" value="1"/>
</dbReference>
<dbReference type="NCBIfam" id="NF003346">
    <property type="entry name" value="PRK04366.1"/>
    <property type="match status" value="1"/>
</dbReference>
<dbReference type="PANTHER" id="PTHR11773:SF12">
    <property type="entry name" value="GLYCINE CLEAVAGE SYSTEM P PROTEIN"/>
    <property type="match status" value="1"/>
</dbReference>
<dbReference type="PANTHER" id="PTHR11773">
    <property type="entry name" value="GLYCINE DEHYDROGENASE, DECARBOXYLATING"/>
    <property type="match status" value="1"/>
</dbReference>
<dbReference type="Pfam" id="PF21478">
    <property type="entry name" value="GcvP2_C"/>
    <property type="match status" value="1"/>
</dbReference>
<dbReference type="Pfam" id="PF02347">
    <property type="entry name" value="GDC-P"/>
    <property type="match status" value="2"/>
</dbReference>
<dbReference type="SUPFAM" id="SSF53383">
    <property type="entry name" value="PLP-dependent transferases"/>
    <property type="match status" value="2"/>
</dbReference>
<reference key="1">
    <citation type="journal article" date="1995" name="Eur. J. Biochem.">
        <title>Structure and expression analysis of the gdcsPA and gdcsPB genes encoding two P-isoproteins of the glycine-cleavage system from Flaveria pringlei.</title>
        <authorList>
            <person name="Bauwe H."/>
            <person name="Chu C.-C."/>
            <person name="Kopriva S."/>
            <person name="Nan Q."/>
        </authorList>
    </citation>
    <scope>NUCLEOTIDE SEQUENCE [GENOMIC DNA]</scope>
    <source>
        <tissue>Leaf</tissue>
    </source>
</reference>
<feature type="transit peptide" description="Mitochondrion" evidence="2">
    <location>
        <begin position="1"/>
        <end position="63"/>
    </location>
</feature>
<feature type="chain" id="PRO_0000010747" description="Glycine dehydrogenase (decarboxylating) B, mitochondrial">
    <location>
        <begin position="64"/>
        <end position="1034"/>
    </location>
</feature>
<feature type="modified residue" description="N6-(pyridoxal phosphate)lysine" evidence="1">
    <location>
        <position position="770"/>
    </location>
</feature>
<name>GCSPB_FLAPR</name>
<protein>
    <recommendedName>
        <fullName>Glycine dehydrogenase (decarboxylating) B, mitochondrial</fullName>
        <ecNumber>1.4.4.2</ecNumber>
    </recommendedName>
    <alternativeName>
        <fullName>Glycine cleavage system P protein B</fullName>
    </alternativeName>
    <alternativeName>
        <fullName>Glycine decarboxylase B</fullName>
    </alternativeName>
    <alternativeName>
        <fullName>Glycine dehydrogenase (aminomethyl-transferring) B</fullName>
    </alternativeName>
</protein>
<sequence>MERARRLAILGRLVSQTKHNPSISSPALCSPSRYVSSLSPYVCSGTNVRSDRNLNGFGSQVRTISVEALKPSDTFPRRHNSATPEEQTKMAEFVGFPNLDSLIDATVPKSIRLDSMKYSKFDEGLTESQMIAHMQDLASKNKIFKSFIGMGYYNTSVPTVILRNIMENPGWYTQYTPYQAEIAQGRLESLLNFQTMITDLTGLPMSNASLLDEGTAAAEAMAMCNNIQKGKKKTFIIASNCHPQTIDICKTRADGFDLKVVTSDLKDFDYSSGDVCGVLVQYPGTEGELLDYSEFIKNAHANGVKVVMASDLLALTILKPPGELGADIVVGSAQRFGVPMGYGGPHAAFLATSQEYKRMMPGRIIGVSVDSSGKPALRMAMQTREQHIRRDKATSNICTAQALLANMAAMFGVYHGPEGLKTIAKRVHGLAGTFASGLKKLGTVQVQDLPFFDTVKVTCADSKAIAEEAYKHKMNLRIVDKNTITVAFDETTTIEDVDTLFKVFALGKPVTFTAASIAPEVQDAIPSGLVRETPYLTHPIFNMYHTEHELLRYISKLQSKDLSLCHSMIPLGSCTMKLNATTEMMPVTWPAFADIHPFAPTEQAQGYQEMFKNLGDLLCTITGFDSFSLQPNAGAAGEYAGLMVIRAYHMARGDHHRNVCIIPVSAHGTNPASAAMCGMKIITVGTDSKGNINIEELRKAAEANKENLSALMVTYPSTHGVYEEGIDEICKIIHDNGGQVYMDGANMNAQVGLTSPGWIGADVCHLNLHKTFCIPHGGGGPGMGPIGVKKHLAPYLPSHPVVPTGGIPAPEQSQPLGTIAAAPWGSALILPISYTYIAMMGSQGITNASKIAILNANYMAKRLENHYPILFRGVNGTVAHEFIVDLRPLKTTAGIEPEDVAKRLIDYGFHGPTMSWPVPGTLMIEPTESESKAELDRFCDALISIRQEIAEIEKGNVDFNNNVIKGAPHPPQLLMADKWTKPYSREYAAYPAPWLRAAKFWPTTCRVDNVYGDRNLICTLQPPQEYEEKAEATA</sequence>
<comment type="function">
    <text>The glycine cleavage system catalyzes the degradation of glycine. The P protein binds the alpha-amino group of glycine through its pyridoxal phosphate cofactor; CO(2) is released and the remaining methylamine moiety is then transferred to the lipoamide cofactor of the H protein.</text>
</comment>
<comment type="catalytic activity">
    <reaction>
        <text>N(6)-[(R)-lipoyl]-L-lysyl-[glycine-cleavage complex H protein] + glycine + H(+) = N(6)-[(R)-S(8)-aminomethyldihydrolipoyl]-L-lysyl-[glycine-cleavage complex H protein] + CO2</text>
        <dbReference type="Rhea" id="RHEA:24304"/>
        <dbReference type="Rhea" id="RHEA-COMP:10494"/>
        <dbReference type="Rhea" id="RHEA-COMP:10495"/>
        <dbReference type="ChEBI" id="CHEBI:15378"/>
        <dbReference type="ChEBI" id="CHEBI:16526"/>
        <dbReference type="ChEBI" id="CHEBI:57305"/>
        <dbReference type="ChEBI" id="CHEBI:83099"/>
        <dbReference type="ChEBI" id="CHEBI:83143"/>
        <dbReference type="EC" id="1.4.4.2"/>
    </reaction>
</comment>
<comment type="cofactor">
    <cofactor>
        <name>pyridoxal 5'-phosphate</name>
        <dbReference type="ChEBI" id="CHEBI:597326"/>
    </cofactor>
</comment>
<comment type="subunit">
    <text evidence="1">Homodimer (By similarity). The glycine cleavage system is composed of four proteins: P, T, L and H.</text>
</comment>
<comment type="subcellular location">
    <subcellularLocation>
        <location>Mitochondrion</location>
    </subcellularLocation>
</comment>
<comment type="similarity">
    <text evidence="3">Belongs to the GcvP family.</text>
</comment>
<gene>
    <name type="primary">GDCSPB</name>
</gene>
<accession>P49362</accession>
<keyword id="KW-0496">Mitochondrion</keyword>
<keyword id="KW-0560">Oxidoreductase</keyword>
<keyword id="KW-0663">Pyridoxal phosphate</keyword>
<keyword id="KW-0809">Transit peptide</keyword>
<evidence type="ECO:0000250" key="1"/>
<evidence type="ECO:0000255" key="2"/>
<evidence type="ECO:0000305" key="3"/>